<organism>
    <name type="scientific">Allorhizobium ampelinum (strain ATCC BAA-846 / DSM 112012 / S4)</name>
    <name type="common">Agrobacterium vitis (strain S4)</name>
    <dbReference type="NCBI Taxonomy" id="311402"/>
    <lineage>
        <taxon>Bacteria</taxon>
        <taxon>Pseudomonadati</taxon>
        <taxon>Pseudomonadota</taxon>
        <taxon>Alphaproteobacteria</taxon>
        <taxon>Hyphomicrobiales</taxon>
        <taxon>Rhizobiaceae</taxon>
        <taxon>Rhizobium/Agrobacterium group</taxon>
        <taxon>Allorhizobium</taxon>
        <taxon>Allorhizobium ampelinum</taxon>
    </lineage>
</organism>
<sequence>MARAFLFVLDSFGVGGAPDAPAYGDDGADTLGHIAEFCAAGAGDRDGLRAGPLMLPNLSALGLLQIASLASGSLPAGMALPERVFGLYGAANEISRGKDTPSGHWEIAGTPVMFDWGYFPQEGDAFPADLVADICKRADLPGILGNCHASGTDILARLGEEHCRTGQPICYTSSDSVFQIAAHEHVFGLERLLRLCEIVRELLTPYRIGRVIARPFIGNSASNFQRTGNRRDYSVPPPEPTLLDRLSEAGRTVHAIGKIGDIFAHQGTGRDIKANGNAALMEATLAVMDEAADGDLVFTNFVDFDMLYGHRRDVPGYAAALEAFDLWLPDVYRKLIPGDMVILTADHGCDPTWRGTDHTRERVPIMAFGPGIRARSIGIRDTYADIGETIAAHLGIAPGRHGMSFL</sequence>
<accession>B9JYP7</accession>
<comment type="function">
    <text evidence="1">Isomerase that catalyzes the conversion of deoxy-ribose 1-phosphate (dRib-1-P) and ribose 1-phosphate (Rib-1-P) to deoxy-ribose 5-phosphate (dRib-5-P) and ribose 5-phosphate (Rib-5-P), respectively.</text>
</comment>
<comment type="catalytic activity">
    <reaction evidence="1">
        <text>2-deoxy-alpha-D-ribose 1-phosphate = 2-deoxy-D-ribose 5-phosphate</text>
        <dbReference type="Rhea" id="RHEA:27658"/>
        <dbReference type="ChEBI" id="CHEBI:57259"/>
        <dbReference type="ChEBI" id="CHEBI:62877"/>
        <dbReference type="EC" id="5.4.2.7"/>
    </reaction>
</comment>
<comment type="catalytic activity">
    <reaction evidence="1">
        <text>alpha-D-ribose 1-phosphate = D-ribose 5-phosphate</text>
        <dbReference type="Rhea" id="RHEA:18793"/>
        <dbReference type="ChEBI" id="CHEBI:57720"/>
        <dbReference type="ChEBI" id="CHEBI:78346"/>
        <dbReference type="EC" id="5.4.2.7"/>
    </reaction>
</comment>
<comment type="cofactor">
    <cofactor evidence="1">
        <name>Mn(2+)</name>
        <dbReference type="ChEBI" id="CHEBI:29035"/>
    </cofactor>
    <text evidence="1">Binds 2 manganese ions.</text>
</comment>
<comment type="pathway">
    <text evidence="1">Carbohydrate degradation; 2-deoxy-D-ribose 1-phosphate degradation; D-glyceraldehyde 3-phosphate and acetaldehyde from 2-deoxy-alpha-D-ribose 1-phosphate: step 1/2.</text>
</comment>
<comment type="subcellular location">
    <subcellularLocation>
        <location evidence="1">Cytoplasm</location>
    </subcellularLocation>
</comment>
<comment type="similarity">
    <text evidence="1">Belongs to the phosphopentomutase family.</text>
</comment>
<keyword id="KW-0963">Cytoplasm</keyword>
<keyword id="KW-0413">Isomerase</keyword>
<keyword id="KW-0464">Manganese</keyword>
<keyword id="KW-0479">Metal-binding</keyword>
<keyword id="KW-1185">Reference proteome</keyword>
<proteinExistence type="inferred from homology"/>
<reference key="1">
    <citation type="journal article" date="2009" name="J. Bacteriol.">
        <title>Genome sequences of three Agrobacterium biovars help elucidate the evolution of multichromosome genomes in bacteria.</title>
        <authorList>
            <person name="Slater S.C."/>
            <person name="Goldman B.S."/>
            <person name="Goodner B."/>
            <person name="Setubal J.C."/>
            <person name="Farrand S.K."/>
            <person name="Nester E.W."/>
            <person name="Burr T.J."/>
            <person name="Banta L."/>
            <person name="Dickerman A.W."/>
            <person name="Paulsen I."/>
            <person name="Otten L."/>
            <person name="Suen G."/>
            <person name="Welch R."/>
            <person name="Almeida N.F."/>
            <person name="Arnold F."/>
            <person name="Burton O.T."/>
            <person name="Du Z."/>
            <person name="Ewing A."/>
            <person name="Godsy E."/>
            <person name="Heisel S."/>
            <person name="Houmiel K.L."/>
            <person name="Jhaveri J."/>
            <person name="Lu J."/>
            <person name="Miller N.M."/>
            <person name="Norton S."/>
            <person name="Chen Q."/>
            <person name="Phoolcharoen W."/>
            <person name="Ohlin V."/>
            <person name="Ondrusek D."/>
            <person name="Pride N."/>
            <person name="Stricklin S.L."/>
            <person name="Sun J."/>
            <person name="Wheeler C."/>
            <person name="Wilson L."/>
            <person name="Zhu H."/>
            <person name="Wood D.W."/>
        </authorList>
    </citation>
    <scope>NUCLEOTIDE SEQUENCE [LARGE SCALE GENOMIC DNA]</scope>
    <source>
        <strain>ATCC BAA-846 / DSM 112012 / S4</strain>
    </source>
</reference>
<feature type="chain" id="PRO_1000189769" description="Phosphopentomutase">
    <location>
        <begin position="1"/>
        <end position="406"/>
    </location>
</feature>
<feature type="binding site" evidence="1">
    <location>
        <position position="10"/>
    </location>
    <ligand>
        <name>Mn(2+)</name>
        <dbReference type="ChEBI" id="CHEBI:29035"/>
        <label>1</label>
    </ligand>
</feature>
<feature type="binding site" evidence="1">
    <location>
        <position position="305"/>
    </location>
    <ligand>
        <name>Mn(2+)</name>
        <dbReference type="ChEBI" id="CHEBI:29035"/>
        <label>2</label>
    </ligand>
</feature>
<feature type="binding site" evidence="1">
    <location>
        <position position="310"/>
    </location>
    <ligand>
        <name>Mn(2+)</name>
        <dbReference type="ChEBI" id="CHEBI:29035"/>
        <label>2</label>
    </ligand>
</feature>
<feature type="binding site" evidence="1">
    <location>
        <position position="346"/>
    </location>
    <ligand>
        <name>Mn(2+)</name>
        <dbReference type="ChEBI" id="CHEBI:29035"/>
        <label>1</label>
    </ligand>
</feature>
<feature type="binding site" evidence="1">
    <location>
        <position position="347"/>
    </location>
    <ligand>
        <name>Mn(2+)</name>
        <dbReference type="ChEBI" id="CHEBI:29035"/>
        <label>1</label>
    </ligand>
</feature>
<feature type="binding site" evidence="1">
    <location>
        <position position="358"/>
    </location>
    <ligand>
        <name>Mn(2+)</name>
        <dbReference type="ChEBI" id="CHEBI:29035"/>
        <label>2</label>
    </ligand>
</feature>
<evidence type="ECO:0000255" key="1">
    <source>
        <dbReference type="HAMAP-Rule" id="MF_00740"/>
    </source>
</evidence>
<name>DEOB_ALLAM</name>
<dbReference type="EC" id="5.4.2.7" evidence="1"/>
<dbReference type="EMBL" id="CP000633">
    <property type="protein sequence ID" value="ACM35143.1"/>
    <property type="molecule type" value="Genomic_DNA"/>
</dbReference>
<dbReference type="RefSeq" id="WP_012654673.1">
    <property type="nucleotide sequence ID" value="NC_011989.1"/>
</dbReference>
<dbReference type="SMR" id="B9JYP7"/>
<dbReference type="STRING" id="311402.Avi_0229"/>
<dbReference type="KEGG" id="avi:Avi_0229"/>
<dbReference type="eggNOG" id="COG1015">
    <property type="taxonomic scope" value="Bacteria"/>
</dbReference>
<dbReference type="HOGENOM" id="CLU_053861_0_0_5"/>
<dbReference type="UniPathway" id="UPA00002">
    <property type="reaction ID" value="UER00467"/>
</dbReference>
<dbReference type="Proteomes" id="UP000001596">
    <property type="component" value="Chromosome 1"/>
</dbReference>
<dbReference type="GO" id="GO:0005829">
    <property type="term" value="C:cytosol"/>
    <property type="evidence" value="ECO:0007669"/>
    <property type="project" value="TreeGrafter"/>
</dbReference>
<dbReference type="GO" id="GO:0000287">
    <property type="term" value="F:magnesium ion binding"/>
    <property type="evidence" value="ECO:0007669"/>
    <property type="project" value="InterPro"/>
</dbReference>
<dbReference type="GO" id="GO:0030145">
    <property type="term" value="F:manganese ion binding"/>
    <property type="evidence" value="ECO:0007669"/>
    <property type="project" value="UniProtKB-UniRule"/>
</dbReference>
<dbReference type="GO" id="GO:0008973">
    <property type="term" value="F:phosphopentomutase activity"/>
    <property type="evidence" value="ECO:0007669"/>
    <property type="project" value="UniProtKB-UniRule"/>
</dbReference>
<dbReference type="GO" id="GO:0006018">
    <property type="term" value="P:2-deoxyribose 1-phosphate catabolic process"/>
    <property type="evidence" value="ECO:0007669"/>
    <property type="project" value="UniProtKB-UniRule"/>
</dbReference>
<dbReference type="GO" id="GO:0006015">
    <property type="term" value="P:5-phosphoribose 1-diphosphate biosynthetic process"/>
    <property type="evidence" value="ECO:0007669"/>
    <property type="project" value="UniProtKB-UniPathway"/>
</dbReference>
<dbReference type="GO" id="GO:0043094">
    <property type="term" value="P:metabolic compound salvage"/>
    <property type="evidence" value="ECO:0007669"/>
    <property type="project" value="InterPro"/>
</dbReference>
<dbReference type="GO" id="GO:0009117">
    <property type="term" value="P:nucleotide metabolic process"/>
    <property type="evidence" value="ECO:0007669"/>
    <property type="project" value="InterPro"/>
</dbReference>
<dbReference type="CDD" id="cd16009">
    <property type="entry name" value="PPM"/>
    <property type="match status" value="1"/>
</dbReference>
<dbReference type="FunFam" id="3.30.70.1250:FF:000001">
    <property type="entry name" value="Phosphopentomutase"/>
    <property type="match status" value="1"/>
</dbReference>
<dbReference type="Gene3D" id="3.40.720.10">
    <property type="entry name" value="Alkaline Phosphatase, subunit A"/>
    <property type="match status" value="1"/>
</dbReference>
<dbReference type="Gene3D" id="3.30.70.1250">
    <property type="entry name" value="Phosphopentomutase"/>
    <property type="match status" value="1"/>
</dbReference>
<dbReference type="HAMAP" id="MF_00740">
    <property type="entry name" value="Phosphopentomut"/>
    <property type="match status" value="1"/>
</dbReference>
<dbReference type="InterPro" id="IPR017850">
    <property type="entry name" value="Alkaline_phosphatase_core_sf"/>
</dbReference>
<dbReference type="InterPro" id="IPR010045">
    <property type="entry name" value="DeoB"/>
</dbReference>
<dbReference type="InterPro" id="IPR006124">
    <property type="entry name" value="Metalloenzyme"/>
</dbReference>
<dbReference type="InterPro" id="IPR024052">
    <property type="entry name" value="Phosphopentomutase_DeoB_cap_sf"/>
</dbReference>
<dbReference type="NCBIfam" id="TIGR01696">
    <property type="entry name" value="deoB"/>
    <property type="match status" value="1"/>
</dbReference>
<dbReference type="NCBIfam" id="NF003766">
    <property type="entry name" value="PRK05362.1"/>
    <property type="match status" value="1"/>
</dbReference>
<dbReference type="PANTHER" id="PTHR21110">
    <property type="entry name" value="PHOSPHOPENTOMUTASE"/>
    <property type="match status" value="1"/>
</dbReference>
<dbReference type="PANTHER" id="PTHR21110:SF0">
    <property type="entry name" value="PHOSPHOPENTOMUTASE"/>
    <property type="match status" value="1"/>
</dbReference>
<dbReference type="Pfam" id="PF01676">
    <property type="entry name" value="Metalloenzyme"/>
    <property type="match status" value="1"/>
</dbReference>
<dbReference type="PIRSF" id="PIRSF001491">
    <property type="entry name" value="Ppentomutase"/>
    <property type="match status" value="1"/>
</dbReference>
<dbReference type="SUPFAM" id="SSF53649">
    <property type="entry name" value="Alkaline phosphatase-like"/>
    <property type="match status" value="1"/>
</dbReference>
<dbReference type="SUPFAM" id="SSF143856">
    <property type="entry name" value="DeoB insert domain-like"/>
    <property type="match status" value="1"/>
</dbReference>
<gene>
    <name evidence="1" type="primary">deoB</name>
    <name type="ordered locus">Avi_0229</name>
</gene>
<protein>
    <recommendedName>
        <fullName evidence="1">Phosphopentomutase</fullName>
        <ecNumber evidence="1">5.4.2.7</ecNumber>
    </recommendedName>
    <alternativeName>
        <fullName evidence="1">Phosphodeoxyribomutase</fullName>
    </alternativeName>
</protein>